<proteinExistence type="evidence at protein level"/>
<keyword id="KW-0027">Amidation</keyword>
<keyword id="KW-0044">Antibiotic</keyword>
<keyword id="KW-0929">Antimicrobial</keyword>
<keyword id="KW-0145">Chemotaxis</keyword>
<keyword id="KW-0903">Direct protein sequencing</keyword>
<keyword id="KW-0295">Fungicide</keyword>
<keyword id="KW-1213">G-protein coupled receptor impairing toxin</keyword>
<keyword id="KW-0391">Immunity</keyword>
<keyword id="KW-0399">Innate immunity</keyword>
<keyword id="KW-0467">Mast cell degranulation</keyword>
<keyword id="KW-0472">Membrane</keyword>
<keyword id="KW-0959">Myotoxin</keyword>
<keyword id="KW-0964">Secreted</keyword>
<keyword id="KW-1052">Target cell membrane</keyword>
<keyword id="KW-1053">Target membrane</keyword>
<keyword id="KW-0800">Toxin</keyword>
<protein>
    <recommendedName>
        <fullName evidence="10">Polybia-MP-II</fullName>
    </recommendedName>
    <alternativeName>
        <fullName evidence="9 11">Polybia-MPII</fullName>
    </alternativeName>
    <alternativeName>
        <fullName evidence="8">Venom protein 13a</fullName>
        <shortName evidence="12">VP13a</shortName>
    </alternativeName>
</protein>
<sequence>INWLKLGKMVIDAL</sequence>
<name>MAST2_POLPI</name>
<feature type="peptide" id="PRO_0000248506" description="Polybia-MP-II" evidence="5">
    <location>
        <begin position="1"/>
        <end position="14"/>
    </location>
</feature>
<feature type="modified residue" description="Leucine amide" evidence="5">
    <location>
        <position position="14"/>
    </location>
</feature>
<organism>
    <name type="scientific">Polybia paulista</name>
    <name type="common">Neotropical social wasp</name>
    <name type="synonym">Swarm-founding polistine wasp</name>
    <dbReference type="NCBI Taxonomy" id="291283"/>
    <lineage>
        <taxon>Eukaryota</taxon>
        <taxon>Metazoa</taxon>
        <taxon>Ecdysozoa</taxon>
        <taxon>Arthropoda</taxon>
        <taxon>Hexapoda</taxon>
        <taxon>Insecta</taxon>
        <taxon>Pterygota</taxon>
        <taxon>Neoptera</taxon>
        <taxon>Endopterygota</taxon>
        <taxon>Hymenoptera</taxon>
        <taxon>Apocrita</taxon>
        <taxon>Aculeata</taxon>
        <taxon>Vespoidea</taxon>
        <taxon>Vespidae</taxon>
        <taxon>Polistinae</taxon>
        <taxon>Epiponini</taxon>
        <taxon>Polybia</taxon>
    </lineage>
</organism>
<dbReference type="GO" id="GO:0005576">
    <property type="term" value="C:extracellular region"/>
    <property type="evidence" value="ECO:0000314"/>
    <property type="project" value="UniProtKB"/>
</dbReference>
<dbReference type="GO" id="GO:0016020">
    <property type="term" value="C:membrane"/>
    <property type="evidence" value="ECO:0007669"/>
    <property type="project" value="UniProtKB-KW"/>
</dbReference>
<dbReference type="GO" id="GO:0044218">
    <property type="term" value="C:other organism cell membrane"/>
    <property type="evidence" value="ECO:0007669"/>
    <property type="project" value="UniProtKB-KW"/>
</dbReference>
<dbReference type="GO" id="GO:0090729">
    <property type="term" value="F:toxin activity"/>
    <property type="evidence" value="ECO:0007669"/>
    <property type="project" value="UniProtKB-KW"/>
</dbReference>
<dbReference type="GO" id="GO:0006935">
    <property type="term" value="P:chemotaxis"/>
    <property type="evidence" value="ECO:0007669"/>
    <property type="project" value="UniProtKB-KW"/>
</dbReference>
<dbReference type="GO" id="GO:0042742">
    <property type="term" value="P:defense response to bacterium"/>
    <property type="evidence" value="ECO:0007669"/>
    <property type="project" value="UniProtKB-KW"/>
</dbReference>
<dbReference type="GO" id="GO:0050832">
    <property type="term" value="P:defense response to fungus"/>
    <property type="evidence" value="ECO:0007669"/>
    <property type="project" value="UniProtKB-KW"/>
</dbReference>
<dbReference type="GO" id="GO:0045087">
    <property type="term" value="P:innate immune response"/>
    <property type="evidence" value="ECO:0007669"/>
    <property type="project" value="UniProtKB-KW"/>
</dbReference>
<dbReference type="GO" id="GO:0031640">
    <property type="term" value="P:killing of cells of another organism"/>
    <property type="evidence" value="ECO:0007669"/>
    <property type="project" value="UniProtKB-KW"/>
</dbReference>
<dbReference type="GO" id="GO:0044480">
    <property type="term" value="P:venom-mediated mast cell degranulation in another organism"/>
    <property type="evidence" value="ECO:0000314"/>
    <property type="project" value="UniProtKB"/>
</dbReference>
<dbReference type="InterPro" id="IPR013214">
    <property type="entry name" value="Mastoparan_peptide"/>
</dbReference>
<dbReference type="Pfam" id="PF08251">
    <property type="entry name" value="Mastoparan_2"/>
    <property type="match status" value="1"/>
</dbReference>
<accession>P84915</accession>
<reference key="1">
    <citation type="journal article" date="2004" name="Rapid Commun. Mass Spectrom.">
        <title>Mass spectrometric characterization of two novel inflammatory peptides from the venom of the social wasp Polybia paulista.</title>
        <authorList>
            <person name="de Souza B.M."/>
            <person name="Marques M.R."/>
            <person name="Tomazela D.M."/>
            <person name="Eberlin M.N."/>
            <person name="Mendes M.A."/>
            <person name="Palma M.S."/>
        </authorList>
    </citation>
    <scope>PROTEIN SEQUENCE</scope>
    <scope>FUNCTION</scope>
    <scope>SUBCELLULAR LOCATION</scope>
    <scope>AMIDATION AT LEU-14</scope>
    <scope>MASS SPECTROMETRY</scope>
    <source>
        <tissue>Venom</tissue>
    </source>
</reference>
<reference key="2">
    <citation type="journal article" date="2009" name="Peptides">
        <title>Characterization of two novel polyfunctional mastoparan peptides from the venom of the social wasp Polybia paulista.</title>
        <authorList>
            <person name="de Souza B.M."/>
            <person name="da Silva A.V."/>
            <person name="Resende V.M."/>
            <person name="Arcuri H.A."/>
            <person name="Dos Santos Cabrera M.P."/>
            <person name="Ruggiero Neto J."/>
            <person name="Palma M.S."/>
        </authorList>
    </citation>
    <scope>PROTEIN SEQUENCE</scope>
    <scope>SYNTHESIS</scope>
    <scope>FUNCTION</scope>
    <scope>SUBCELLULAR LOCATION</scope>
    <scope>AMIDATION AT LEU14</scope>
    <scope>3D-STRUCTURE MODELING</scope>
    <source>
        <tissue>Venom</tissue>
    </source>
</reference>
<reference key="3">
    <citation type="journal article" date="2007" name="Toxicon">
        <title>Myotoxic effects of mastoparan from Polybia paulista (Hymenoptera, Epiponini) wasp venom in mice skeletal muscle.</title>
        <authorList>
            <person name="Rocha T."/>
            <person name="de Souza B.M."/>
            <person name="Palma M.S."/>
            <person name="da Cruz-Hoefling M.A."/>
        </authorList>
    </citation>
    <scope>FUNCTION</scope>
    <scope>SYNTHESIS</scope>
</reference>
<reference key="4">
    <citation type="journal article" date="2008" name="Microsc. Res. Tech.">
        <title>Mastoparan effects in skeletal muscle damage: an ultrastructural view until now concealed.</title>
        <authorList>
            <person name="Rocha T."/>
            <person name="Leonardo M.B."/>
            <person name="De Souza B.M."/>
            <person name="Palma M.S."/>
            <person name="Da Cruz-Hoefling M.A."/>
        </authorList>
    </citation>
    <scope>FUNCTION</scope>
    <scope>SYNTHESIS</scope>
</reference>
<reference key="5">
    <citation type="journal article" date="2019" name="Toxins">
        <title>Antimicrobial and antibiofilm effects of peptides from venom of social wasp and scorpion on multidrug-resistant Acinetobacter baumannii.</title>
        <authorList>
            <person name="das Neves R.C."/>
            <person name="Mortari M.R."/>
            <person name="Schwartz E.F."/>
            <person name="Kipnis A."/>
            <person name="Junqueira-Kipnis A.P."/>
        </authorList>
    </citation>
    <scope>FUNCTION</scope>
    <scope>BIOTECHNOLOGY</scope>
</reference>
<comment type="function">
    <text evidence="1 2 3 5 6 7">Antimicrobial and mast cell degranulating peptide with chemotactic activity for leukocytes (PubMed:15150833, PubMed:19463874, PubMed:30974767). Is active against both Gram-negative and -positive bacteria (Staphylococcus aureus (MIC=2 uM), Mycobacterium abscessus subsp. massiliense, S.aureus (EC(50)=1.83 uM), Escherichia coli (MIC=5 uM), Pseudomonas aeruginosa (MIC=38 uM), Bacillus cereus (MIC=5 uM), and the multidrug-resistant bacterium A.baumannii), and fungi (Candida albicans (EC(50)=12.9 uM, EC(90)=15.3 uM) and Cryptococcus neoformans (EC(50)=11 uM, EC(90)=22.7 uM)) (By similarity) (PubMed:19463874, PubMed:30974767). Inhibits biofilm formation of A.baumannii and Staphylococcus spp. bacteria (PubMed:30974767). Mycobacteria cell shape and cell wall integrity are not altered after exposure to the peptide (6.25 uM) (By similarity). Has low hemolytic activity (MIC=50 uM) (By similarity) (PubMed:15150833, PubMed:19463874). Is also cytotoxic to mouse peritoneal macrophages (EC(50)=13.19 uM) (By similarity). Also causes moderate mast cell degranulation (ED(50)=80 uM) and exhibits chemotactic activity for polymorphonucleated leukocytes (PMNL) (PubMed:15150833, PubMed:19463874). Its mast cell degranulation activity may be related to the activation of G-protein coupled receptors in mast cells as well as interaction with other proteins located in cell endosomal membranes in the mast cells (By similarity). In vivo, intramuscular injection causes strong myotoxicity, by targeting sarcolemma, sarcoplasmic reticulum and mitochondria (PubMed:17572466, PubMed:18072285). In vivo, shows antistaphylococcal activity (S.aureus) with a decline bacterial load after 6 days of topical treatment (By similarity).</text>
</comment>
<comment type="subcellular location">
    <subcellularLocation>
        <location evidence="5 6">Secreted</location>
    </subcellularLocation>
    <subcellularLocation>
        <location evidence="13">Target cell membrane</location>
    </subcellularLocation>
    <text evidence="13">Assumes an amphipathic alpha-helical conformation in a lipid environment.</text>
</comment>
<comment type="tissue specificity">
    <text evidence="12">Expressed by the venom gland.</text>
</comment>
<comment type="mass spectrometry"/>
<comment type="biotechnology">
    <text evidence="7">Could be used to treat biofilm-resistant agents such as A.baumannii and Staphylococcus spp. coated on the surfaces of implanted medical devices, such as vascular stents.</text>
</comment>
<comment type="miscellaneous">
    <text evidence="11">The primary structure of this mature peptide is identical to that of Polybia-MPII from Pseudopolybia vespiceps testacea (AC P0DQT3).</text>
</comment>
<comment type="similarity">
    <text evidence="4">Belongs to the MCD family. Mastoparan subfamily.</text>
</comment>
<evidence type="ECO:0000250" key="1">
    <source>
        <dbReference type="UniProtKB" id="P01514"/>
    </source>
</evidence>
<evidence type="ECO:0000250" key="2">
    <source>
        <dbReference type="UniProtKB" id="P0DQT3"/>
    </source>
</evidence>
<evidence type="ECO:0000250" key="3">
    <source>
        <dbReference type="UniProtKB" id="P84914"/>
    </source>
</evidence>
<evidence type="ECO:0000255" key="4"/>
<evidence type="ECO:0000269" key="5">
    <source>
    </source>
</evidence>
<evidence type="ECO:0000269" key="6">
    <source>
    </source>
</evidence>
<evidence type="ECO:0000269" key="7">
    <source>
    </source>
</evidence>
<evidence type="ECO:0000303" key="8">
    <source>
    </source>
</evidence>
<evidence type="ECO:0000303" key="9">
    <source>
    </source>
</evidence>
<evidence type="ECO:0000303" key="10">
    <source>
    </source>
</evidence>
<evidence type="ECO:0000305" key="11"/>
<evidence type="ECO:0000305" key="12">
    <source>
    </source>
</evidence>
<evidence type="ECO:0000305" key="13">
    <source>
    </source>
</evidence>